<organism>
    <name type="scientific">Canis lupus familiaris</name>
    <name type="common">Dog</name>
    <name type="synonym">Canis familiaris</name>
    <dbReference type="NCBI Taxonomy" id="9615"/>
    <lineage>
        <taxon>Eukaryota</taxon>
        <taxon>Metazoa</taxon>
        <taxon>Chordata</taxon>
        <taxon>Craniata</taxon>
        <taxon>Vertebrata</taxon>
        <taxon>Euteleostomi</taxon>
        <taxon>Mammalia</taxon>
        <taxon>Eutheria</taxon>
        <taxon>Laurasiatheria</taxon>
        <taxon>Carnivora</taxon>
        <taxon>Caniformia</taxon>
        <taxon>Canidae</taxon>
        <taxon>Canis</taxon>
    </lineage>
</organism>
<sequence length="837" mass="96568">MSLSHLYRDGEGHMDDDDDERENFEITDWDLQNEFNPNRQRHWQTKEEATYGVWAERDSDEERPSFGGKRARDYSAPVNFISAGLKKGAAEEAELEDSEDEEKPVKQDDFPKDFGPKKLKTGGNFKPSQKGFAGGTKSFMDFGSWERHTKGIGQKLLQKMGYVPGRGLGKNAQGIINPIEAKQRKGKGAVGAYGSERTTQSLQDFPVVDSEEEAEEEFQKELSQWRKDPSGSKKKPKYSYKTVEELKAKGRISKKLAAPQKELSQVKVIDMTGREQKVYYSYSQISHKHNVPDDGLPLPSQQPPQPGKEAKAPGFALPELEHNLQLLIDLTEQEIIQSDRQLQYERDMVVNLSHELEKMSEVLEHEERVIANLSKVLEMVEECERRLQPSCSNPLTLDECARIFETLQDKYYEEYRMSDRVDLAVAIVYPLMKEYFKEWDPLKDCAYGTQVISRWKTLLENDQLLSHGGQDLSADAFHRLIWEVWMPFVRNIVTQWQPRNCDPMVDFLDSWVHIIPVWILDNILDQLIFPKLQKEVENWNPLTDTVPIHSWVHPWLPLMQARLEPLYSPIRSKLSSALQKWHPSDSSAKLILQPWKDVFTPGSWEAFMVKNIVPKLGMCLGELVINPHQQHMDAFYWVIDWEGMISVSSLVGLLEKHFFPKWLQVLCSWLSNSPNYEEITKWYLGWKSMFSDQVLAHPSVKDKFNEALDIMNRAVSSNVGAYMQPGARENIAYLTHTERRKDFQYEAMQERREAENMAQRGIGVAASSVPMNFKDLIETKAEEHNIVFMPVIGKRHEGKQLYTFGRIVIYIDRGVVFVQGEKTWVPTSLQSLIDMAK</sequence>
<dbReference type="EMBL" id="DQ342030">
    <property type="protein sequence ID" value="ABC69922.1"/>
    <property type="molecule type" value="mRNA"/>
</dbReference>
<dbReference type="RefSeq" id="NP_001073577.1">
    <property type="nucleotide sequence ID" value="NM_001080108.1"/>
</dbReference>
<dbReference type="RefSeq" id="XP_005636074.1">
    <property type="nucleotide sequence ID" value="XM_005636017.2"/>
</dbReference>
<dbReference type="SMR" id="A1XD97"/>
<dbReference type="FunCoup" id="A1XD97">
    <property type="interactions" value="2711"/>
</dbReference>
<dbReference type="STRING" id="9615.ENSCAFP00000017288"/>
<dbReference type="PaxDb" id="9612-ENSCAFP00000043052"/>
<dbReference type="Ensembl" id="ENSCAFT00000018663.6">
    <property type="protein sequence ID" value="ENSCAFP00000017288.3"/>
    <property type="gene ID" value="ENSCAFG00000011741.6"/>
</dbReference>
<dbReference type="Ensembl" id="ENSCAFT00030047323.1">
    <property type="protein sequence ID" value="ENSCAFP00030041377.1"/>
    <property type="gene ID" value="ENSCAFG00030025614.1"/>
</dbReference>
<dbReference type="GeneID" id="477530"/>
<dbReference type="KEGG" id="cfa:477530"/>
<dbReference type="CTD" id="24144"/>
<dbReference type="VGNC" id="VGNC:47300">
    <property type="gene designation" value="TFIP11"/>
</dbReference>
<dbReference type="eggNOG" id="KOG2184">
    <property type="taxonomic scope" value="Eukaryota"/>
</dbReference>
<dbReference type="HOGENOM" id="CLU_007977_1_1_1"/>
<dbReference type="InParanoid" id="A1XD97"/>
<dbReference type="OMA" id="CEQDIIQ"/>
<dbReference type="OrthoDB" id="4822at2759"/>
<dbReference type="TreeFam" id="TF314887"/>
<dbReference type="Proteomes" id="UP000002254">
    <property type="component" value="Chromosome 26"/>
</dbReference>
<dbReference type="Proteomes" id="UP000694429">
    <property type="component" value="Chromosome 26"/>
</dbReference>
<dbReference type="Proteomes" id="UP000694542">
    <property type="component" value="Unplaced"/>
</dbReference>
<dbReference type="Proteomes" id="UP000805418">
    <property type="component" value="Unplaced"/>
</dbReference>
<dbReference type="Bgee" id="ENSCAFG00000011741">
    <property type="expression patterns" value="Expressed in granulocyte and 47 other cell types or tissues"/>
</dbReference>
<dbReference type="GO" id="GO:0005737">
    <property type="term" value="C:cytoplasm"/>
    <property type="evidence" value="ECO:0007669"/>
    <property type="project" value="UniProtKB-SubCell"/>
</dbReference>
<dbReference type="GO" id="GO:0005681">
    <property type="term" value="C:spliceosomal complex"/>
    <property type="evidence" value="ECO:0000250"/>
    <property type="project" value="UniProtKB"/>
</dbReference>
<dbReference type="GO" id="GO:0071008">
    <property type="term" value="C:U2-type post-mRNA release spliceosomal complex"/>
    <property type="evidence" value="ECO:0000250"/>
    <property type="project" value="UniProtKB"/>
</dbReference>
<dbReference type="GO" id="GO:0003676">
    <property type="term" value="F:nucleic acid binding"/>
    <property type="evidence" value="ECO:0007669"/>
    <property type="project" value="InterPro"/>
</dbReference>
<dbReference type="GO" id="GO:0031214">
    <property type="term" value="P:biomineral tissue development"/>
    <property type="evidence" value="ECO:0007669"/>
    <property type="project" value="UniProtKB-KW"/>
</dbReference>
<dbReference type="GO" id="GO:0000390">
    <property type="term" value="P:spliceosomal complex disassembly"/>
    <property type="evidence" value="ECO:0000250"/>
    <property type="project" value="UniProtKB"/>
</dbReference>
<dbReference type="InterPro" id="IPR000467">
    <property type="entry name" value="G_patch_dom"/>
</dbReference>
<dbReference type="InterPro" id="IPR022783">
    <property type="entry name" value="GCFC_dom"/>
</dbReference>
<dbReference type="InterPro" id="IPR022159">
    <property type="entry name" value="STIP/TFIP11_N"/>
</dbReference>
<dbReference type="InterPro" id="IPR024933">
    <property type="entry name" value="TFP11"/>
</dbReference>
<dbReference type="InterPro" id="IPR045211">
    <property type="entry name" value="TFP11/STIP/Ntr1"/>
</dbReference>
<dbReference type="PANTHER" id="PTHR23329:SF1">
    <property type="entry name" value="TUFTELIN-INTERACTING PROTEIN 11"/>
    <property type="match status" value="1"/>
</dbReference>
<dbReference type="PANTHER" id="PTHR23329">
    <property type="entry name" value="TUFTELIN-INTERACTING PROTEIN 11-RELATED"/>
    <property type="match status" value="1"/>
</dbReference>
<dbReference type="Pfam" id="PF01585">
    <property type="entry name" value="G-patch"/>
    <property type="match status" value="1"/>
</dbReference>
<dbReference type="Pfam" id="PF07842">
    <property type="entry name" value="GCFC"/>
    <property type="match status" value="1"/>
</dbReference>
<dbReference type="Pfam" id="PF12457">
    <property type="entry name" value="TIP_N"/>
    <property type="match status" value="1"/>
</dbReference>
<dbReference type="PIRSF" id="PIRSF017706">
    <property type="entry name" value="TFIP11"/>
    <property type="match status" value="1"/>
</dbReference>
<dbReference type="SMART" id="SM00443">
    <property type="entry name" value="G_patch"/>
    <property type="match status" value="1"/>
</dbReference>
<dbReference type="PROSITE" id="PS50174">
    <property type="entry name" value="G_PATCH"/>
    <property type="match status" value="1"/>
</dbReference>
<gene>
    <name type="primary">TFIP11</name>
    <name type="synonym">STIP</name>
</gene>
<reference key="1">
    <citation type="journal article" date="2007" name="Exp. Cell Res.">
        <title>Characterization of STIP, a multi-domain nuclear protein, highly conserved in metazoans, and essential for embryogenesis in Caenorhabditis elegans.</title>
        <authorList>
            <person name="Ji Q."/>
            <person name="Huang C.-H."/>
            <person name="Peng J."/>
            <person name="Hashmi S."/>
            <person name="Ye T."/>
            <person name="Chen Y."/>
        </authorList>
    </citation>
    <scope>NUCLEOTIDE SEQUENCE [MRNA]</scope>
</reference>
<keyword id="KW-0091">Biomineralization</keyword>
<keyword id="KW-0963">Cytoplasm</keyword>
<keyword id="KW-0507">mRNA processing</keyword>
<keyword id="KW-0508">mRNA splicing</keyword>
<keyword id="KW-0539">Nucleus</keyword>
<keyword id="KW-0597">Phosphoprotein</keyword>
<keyword id="KW-1185">Reference proteome</keyword>
<keyword id="KW-0747">Spliceosome</keyword>
<feature type="chain" id="PRO_0000342270" description="Tuftelin-interacting protein 11">
    <location>
        <begin position="1"/>
        <end position="837"/>
    </location>
</feature>
<feature type="domain" description="G-patch" evidence="4">
    <location>
        <begin position="149"/>
        <end position="195"/>
    </location>
</feature>
<feature type="region of interest" description="Required for interaction with DHX15" evidence="1">
    <location>
        <begin position="1"/>
        <end position="50"/>
    </location>
</feature>
<feature type="region of interest" description="Disordered" evidence="5">
    <location>
        <begin position="1"/>
        <end position="31"/>
    </location>
</feature>
<feature type="region of interest" description="Disordered" evidence="5">
    <location>
        <begin position="54"/>
        <end position="73"/>
    </location>
</feature>
<feature type="region of interest" description="Disordered" evidence="5">
    <location>
        <begin position="85"/>
        <end position="133"/>
    </location>
</feature>
<feature type="region of interest" description="Disordered" evidence="5">
    <location>
        <begin position="183"/>
        <end position="236"/>
    </location>
</feature>
<feature type="region of interest" description="Disordered" evidence="5">
    <location>
        <begin position="289"/>
        <end position="312"/>
    </location>
</feature>
<feature type="region of interest" description="Required for nuclear speckle localization" evidence="1">
    <location>
        <begin position="710"/>
        <end position="734"/>
    </location>
</feature>
<feature type="short sequence motif" description="Nuclear localization signal" evidence="1">
    <location>
        <begin position="700"/>
        <end position="705"/>
    </location>
</feature>
<feature type="compositionally biased region" description="Basic and acidic residues" evidence="5">
    <location>
        <begin position="1"/>
        <end position="13"/>
    </location>
</feature>
<feature type="compositionally biased region" description="Acidic residues" evidence="5">
    <location>
        <begin position="14"/>
        <end position="28"/>
    </location>
</feature>
<feature type="compositionally biased region" description="Basic and acidic residues" evidence="5">
    <location>
        <begin position="54"/>
        <end position="64"/>
    </location>
</feature>
<feature type="compositionally biased region" description="Acidic residues" evidence="5">
    <location>
        <begin position="91"/>
        <end position="102"/>
    </location>
</feature>
<feature type="compositionally biased region" description="Basic and acidic residues" evidence="5">
    <location>
        <begin position="103"/>
        <end position="116"/>
    </location>
</feature>
<feature type="compositionally biased region" description="Basic and acidic residues" evidence="5">
    <location>
        <begin position="217"/>
        <end position="231"/>
    </location>
</feature>
<feature type="modified residue" description="Phosphoserine" evidence="2">
    <location>
        <position position="2"/>
    </location>
</feature>
<feature type="modified residue" description="Phosphoserine" evidence="3">
    <location>
        <position position="59"/>
    </location>
</feature>
<feature type="modified residue" description="Phosphoserine" evidence="3">
    <location>
        <position position="98"/>
    </location>
</feature>
<feature type="modified residue" description="Phosphoserine" evidence="3">
    <location>
        <position position="144"/>
    </location>
</feature>
<feature type="modified residue" description="Phosphoserine" evidence="3">
    <location>
        <position position="210"/>
    </location>
</feature>
<protein>
    <recommendedName>
        <fullName>Tuftelin-interacting protein 11</fullName>
    </recommendedName>
    <alternativeName>
        <fullName>Septin and tuftelin-interacting protein 1</fullName>
        <shortName>STIP-1</shortName>
    </alternativeName>
</protein>
<proteinExistence type="evidence at transcript level"/>
<evidence type="ECO:0000250" key="1"/>
<evidence type="ECO:0000250" key="2">
    <source>
        <dbReference type="UniProtKB" id="Q5U2Y6"/>
    </source>
</evidence>
<evidence type="ECO:0000250" key="3">
    <source>
        <dbReference type="UniProtKB" id="Q9UBB9"/>
    </source>
</evidence>
<evidence type="ECO:0000255" key="4">
    <source>
        <dbReference type="PROSITE-ProRule" id="PRU00092"/>
    </source>
</evidence>
<evidence type="ECO:0000256" key="5">
    <source>
        <dbReference type="SAM" id="MobiDB-lite"/>
    </source>
</evidence>
<evidence type="ECO:0000305" key="6"/>
<accession>A1XD97</accession>
<name>TFP11_CANLF</name>
<comment type="function">
    <text evidence="1">Involved in pre-mRNA splicing, specifically in spliceosome disassembly during late-stage splicing events. Intron turnover seems to proceed through reactions in two lariat-intron associated complexes termed Intron Large (IL) and Intron Small (IS). In cooperation with DHX15 seems to mediate the transition of the U2, U5 and U6 snRNP-containing IL complex to the snRNP-free IS complex leading to efficient debranching and turnover of excised introns. May play a role in the differentiation of ameloblasts and odontoblasts or in the forming of the enamel extracellular matrix (By similarity).</text>
</comment>
<comment type="subunit">
    <text evidence="1">Identified in the spliceosome C complex. Found in the Intron Large (IL) complex, a post-mRNA release spliceosomal complex containing the excised intron, U2, U5 and U6 snRNPs, and splicing factors. Interacts with TUFT1. Interacts with DHX15; indicative for a recruitment of DHX15 to the IL complex. Interacts with GCFC2 (By similarity).</text>
</comment>
<comment type="subcellular location">
    <subcellularLocation>
        <location evidence="1">Cytoplasm</location>
    </subcellularLocation>
    <subcellularLocation>
        <location evidence="1">Nucleus</location>
    </subcellularLocation>
    <text evidence="1">In the nucleus localizes to unique speckle domains in close proximity to nuclear speckles and not identical to paraspeckles.</text>
</comment>
<comment type="similarity">
    <text evidence="6">Belongs to the TFP11/STIP family.</text>
</comment>